<evidence type="ECO:0000250" key="1"/>
<evidence type="ECO:0000250" key="2">
    <source>
        <dbReference type="UniProtKB" id="Q4QR76"/>
    </source>
</evidence>
<evidence type="ECO:0000256" key="3">
    <source>
        <dbReference type="SAM" id="MobiDB-lite"/>
    </source>
</evidence>
<evidence type="ECO:0000269" key="4">
    <source>
    </source>
</evidence>
<evidence type="ECO:0000305" key="5"/>
<organism>
    <name type="scientific">Homo sapiens</name>
    <name type="common">Human</name>
    <dbReference type="NCBI Taxonomy" id="9606"/>
    <lineage>
        <taxon>Eukaryota</taxon>
        <taxon>Metazoa</taxon>
        <taxon>Chordata</taxon>
        <taxon>Craniata</taxon>
        <taxon>Vertebrata</taxon>
        <taxon>Euteleostomi</taxon>
        <taxon>Mammalia</taxon>
        <taxon>Eutheria</taxon>
        <taxon>Euarchontoglires</taxon>
        <taxon>Primates</taxon>
        <taxon>Haplorrhini</taxon>
        <taxon>Catarrhini</taxon>
        <taxon>Hominidae</taxon>
        <taxon>Homo</taxon>
    </lineage>
</organism>
<sequence>MATRNSPMPLGTAQGDPGEAGTRPGPDASLRDTGAATQLKMKPRKVHKIKAVIIDLGSQYCKCGYAGEPRPTYFISSTVGKRCPEAADAGDTRKWTLVGHELLNTEAPLKLVNPLKHGIVVDWDCVQDIWEYIFRTAMKILPEEHAVLVSDPPLSPSSNREKYAELMFETFGIPAMHVTSQSLLSIYSYGKTSGLVVESGHGVSHVVPISEGDVLPGLTSRADYAGGDLTNYLMQLLNEAGHAFTDDHLHIIEHIKKKCCYAAFLPEEELGLVPEELRVDYELPDGKLITIGQERFRCSEMLFQPSLAGSTQPGLPELTAACLGRCQDTGFKEEMAANVLLCGGCTMLDGFPERFQRELSLLCPGDSPAVAAAPERKTSVWTGGSILASLQAFQQLWVSKEEFEERGSVAIYSKC</sequence>
<feature type="chain" id="PRO_0000089139" description="Actin-like protein 7B">
    <location>
        <begin position="1"/>
        <end position="415"/>
    </location>
</feature>
<feature type="region of interest" description="Disordered" evidence="3">
    <location>
        <begin position="1"/>
        <end position="31"/>
    </location>
</feature>
<feature type="modified residue" description="Phosphoserine" evidence="2">
    <location>
        <position position="6"/>
    </location>
</feature>
<reference key="1">
    <citation type="journal article" date="1999" name="Genomics">
        <title>Cloning, mapping, and expression of two novel actin genes, actin-like-7A (ACTL7A) and actin-like-7B (ACTL7B), from the familial dysautonomia candidate region on 9q31.</title>
        <authorList>
            <person name="Chadwick B.P."/>
            <person name="Mull J."/>
            <person name="Helbling L.A."/>
            <person name="Gill S."/>
            <person name="Leyne M."/>
            <person name="Robbins C.M."/>
            <person name="Pinkett H.W."/>
            <person name="Makalowska I."/>
            <person name="Maayan C."/>
            <person name="Blumenfeld A."/>
            <person name="Axelrod F.B."/>
            <person name="Brownstein M."/>
            <person name="Gusella J.F."/>
            <person name="Slaugenhaupt S.A."/>
        </authorList>
    </citation>
    <scope>NUCLEOTIDE SEQUENCE [GENOMIC DNA]</scope>
    <scope>TISSUE SPECIFICITY</scope>
</reference>
<reference key="2">
    <citation type="journal article" date="2007" name="Soc. Reprod. Fertil. Suppl.">
        <title>Single nucleotide polymorphisms: discovery of the genetic causes of male infertility.</title>
        <authorList>
            <person name="Tanaka H."/>
            <person name="Hirose M."/>
            <person name="Tokuhiro K."/>
            <person name="Matsuoka Y."/>
            <person name="Miyagawa Y."/>
            <person name="Tsujimura A."/>
            <person name="Okuyama A."/>
            <person name="Nishimune Y."/>
        </authorList>
    </citation>
    <scope>NUCLEOTIDE SEQUENCE [GENOMIC DNA]</scope>
</reference>
<reference key="3">
    <citation type="journal article" date="2004" name="Nat. Genet.">
        <title>Complete sequencing and characterization of 21,243 full-length human cDNAs.</title>
        <authorList>
            <person name="Ota T."/>
            <person name="Suzuki Y."/>
            <person name="Nishikawa T."/>
            <person name="Otsuki T."/>
            <person name="Sugiyama T."/>
            <person name="Irie R."/>
            <person name="Wakamatsu A."/>
            <person name="Hayashi K."/>
            <person name="Sato H."/>
            <person name="Nagai K."/>
            <person name="Kimura K."/>
            <person name="Makita H."/>
            <person name="Sekine M."/>
            <person name="Obayashi M."/>
            <person name="Nishi T."/>
            <person name="Shibahara T."/>
            <person name="Tanaka T."/>
            <person name="Ishii S."/>
            <person name="Yamamoto J."/>
            <person name="Saito K."/>
            <person name="Kawai Y."/>
            <person name="Isono Y."/>
            <person name="Nakamura Y."/>
            <person name="Nagahari K."/>
            <person name="Murakami K."/>
            <person name="Yasuda T."/>
            <person name="Iwayanagi T."/>
            <person name="Wagatsuma M."/>
            <person name="Shiratori A."/>
            <person name="Sudo H."/>
            <person name="Hosoiri T."/>
            <person name="Kaku Y."/>
            <person name="Kodaira H."/>
            <person name="Kondo H."/>
            <person name="Sugawara M."/>
            <person name="Takahashi M."/>
            <person name="Kanda K."/>
            <person name="Yokoi T."/>
            <person name="Furuya T."/>
            <person name="Kikkawa E."/>
            <person name="Omura Y."/>
            <person name="Abe K."/>
            <person name="Kamihara K."/>
            <person name="Katsuta N."/>
            <person name="Sato K."/>
            <person name="Tanikawa M."/>
            <person name="Yamazaki M."/>
            <person name="Ninomiya K."/>
            <person name="Ishibashi T."/>
            <person name="Yamashita H."/>
            <person name="Murakawa K."/>
            <person name="Fujimori K."/>
            <person name="Tanai H."/>
            <person name="Kimata M."/>
            <person name="Watanabe M."/>
            <person name="Hiraoka S."/>
            <person name="Chiba Y."/>
            <person name="Ishida S."/>
            <person name="Ono Y."/>
            <person name="Takiguchi S."/>
            <person name="Watanabe S."/>
            <person name="Yosida M."/>
            <person name="Hotuta T."/>
            <person name="Kusano J."/>
            <person name="Kanehori K."/>
            <person name="Takahashi-Fujii A."/>
            <person name="Hara H."/>
            <person name="Tanase T.-O."/>
            <person name="Nomura Y."/>
            <person name="Togiya S."/>
            <person name="Komai F."/>
            <person name="Hara R."/>
            <person name="Takeuchi K."/>
            <person name="Arita M."/>
            <person name="Imose N."/>
            <person name="Musashino K."/>
            <person name="Yuuki H."/>
            <person name="Oshima A."/>
            <person name="Sasaki N."/>
            <person name="Aotsuka S."/>
            <person name="Yoshikawa Y."/>
            <person name="Matsunawa H."/>
            <person name="Ichihara T."/>
            <person name="Shiohata N."/>
            <person name="Sano S."/>
            <person name="Moriya S."/>
            <person name="Momiyama H."/>
            <person name="Satoh N."/>
            <person name="Takami S."/>
            <person name="Terashima Y."/>
            <person name="Suzuki O."/>
            <person name="Nakagawa S."/>
            <person name="Senoh A."/>
            <person name="Mizoguchi H."/>
            <person name="Goto Y."/>
            <person name="Shimizu F."/>
            <person name="Wakebe H."/>
            <person name="Hishigaki H."/>
            <person name="Watanabe T."/>
            <person name="Sugiyama A."/>
            <person name="Takemoto M."/>
            <person name="Kawakami B."/>
            <person name="Yamazaki M."/>
            <person name="Watanabe K."/>
            <person name="Kumagai A."/>
            <person name="Itakura S."/>
            <person name="Fukuzumi Y."/>
            <person name="Fujimori Y."/>
            <person name="Komiyama M."/>
            <person name="Tashiro H."/>
            <person name="Tanigami A."/>
            <person name="Fujiwara T."/>
            <person name="Ono T."/>
            <person name="Yamada K."/>
            <person name="Fujii Y."/>
            <person name="Ozaki K."/>
            <person name="Hirao M."/>
            <person name="Ohmori Y."/>
            <person name="Kawabata A."/>
            <person name="Hikiji T."/>
            <person name="Kobatake N."/>
            <person name="Inagaki H."/>
            <person name="Ikema Y."/>
            <person name="Okamoto S."/>
            <person name="Okitani R."/>
            <person name="Kawakami T."/>
            <person name="Noguchi S."/>
            <person name="Itoh T."/>
            <person name="Shigeta K."/>
            <person name="Senba T."/>
            <person name="Matsumura K."/>
            <person name="Nakajima Y."/>
            <person name="Mizuno T."/>
            <person name="Morinaga M."/>
            <person name="Sasaki M."/>
            <person name="Togashi T."/>
            <person name="Oyama M."/>
            <person name="Hata H."/>
            <person name="Watanabe M."/>
            <person name="Komatsu T."/>
            <person name="Mizushima-Sugano J."/>
            <person name="Satoh T."/>
            <person name="Shirai Y."/>
            <person name="Takahashi Y."/>
            <person name="Nakagawa K."/>
            <person name="Okumura K."/>
            <person name="Nagase T."/>
            <person name="Nomura N."/>
            <person name="Kikuchi H."/>
            <person name="Masuho Y."/>
            <person name="Yamashita R."/>
            <person name="Nakai K."/>
            <person name="Yada T."/>
            <person name="Nakamura Y."/>
            <person name="Ohara O."/>
            <person name="Isogai T."/>
            <person name="Sugano S."/>
        </authorList>
    </citation>
    <scope>NUCLEOTIDE SEQUENCE [LARGE SCALE MRNA]</scope>
    <source>
        <tissue>Testis</tissue>
    </source>
</reference>
<reference key="4">
    <citation type="journal article" date="2004" name="Nature">
        <title>DNA sequence and analysis of human chromosome 9.</title>
        <authorList>
            <person name="Humphray S.J."/>
            <person name="Oliver K."/>
            <person name="Hunt A.R."/>
            <person name="Plumb R.W."/>
            <person name="Loveland J.E."/>
            <person name="Howe K.L."/>
            <person name="Andrews T.D."/>
            <person name="Searle S."/>
            <person name="Hunt S.E."/>
            <person name="Scott C.E."/>
            <person name="Jones M.C."/>
            <person name="Ainscough R."/>
            <person name="Almeida J.P."/>
            <person name="Ambrose K.D."/>
            <person name="Ashwell R.I.S."/>
            <person name="Babbage A.K."/>
            <person name="Babbage S."/>
            <person name="Bagguley C.L."/>
            <person name="Bailey J."/>
            <person name="Banerjee R."/>
            <person name="Barker D.J."/>
            <person name="Barlow K.F."/>
            <person name="Bates K."/>
            <person name="Beasley H."/>
            <person name="Beasley O."/>
            <person name="Bird C.P."/>
            <person name="Bray-Allen S."/>
            <person name="Brown A.J."/>
            <person name="Brown J.Y."/>
            <person name="Burford D."/>
            <person name="Burrill W."/>
            <person name="Burton J."/>
            <person name="Carder C."/>
            <person name="Carter N.P."/>
            <person name="Chapman J.C."/>
            <person name="Chen Y."/>
            <person name="Clarke G."/>
            <person name="Clark S.Y."/>
            <person name="Clee C.M."/>
            <person name="Clegg S."/>
            <person name="Collier R.E."/>
            <person name="Corby N."/>
            <person name="Crosier M."/>
            <person name="Cummings A.T."/>
            <person name="Davies J."/>
            <person name="Dhami P."/>
            <person name="Dunn M."/>
            <person name="Dutta I."/>
            <person name="Dyer L.W."/>
            <person name="Earthrowl M.E."/>
            <person name="Faulkner L."/>
            <person name="Fleming C.J."/>
            <person name="Frankish A."/>
            <person name="Frankland J.A."/>
            <person name="French L."/>
            <person name="Fricker D.G."/>
            <person name="Garner P."/>
            <person name="Garnett J."/>
            <person name="Ghori J."/>
            <person name="Gilbert J.G.R."/>
            <person name="Glison C."/>
            <person name="Grafham D.V."/>
            <person name="Gribble S."/>
            <person name="Griffiths C."/>
            <person name="Griffiths-Jones S."/>
            <person name="Grocock R."/>
            <person name="Guy J."/>
            <person name="Hall R.E."/>
            <person name="Hammond S."/>
            <person name="Harley J.L."/>
            <person name="Harrison E.S.I."/>
            <person name="Hart E.A."/>
            <person name="Heath P.D."/>
            <person name="Henderson C.D."/>
            <person name="Hopkins B.L."/>
            <person name="Howard P.J."/>
            <person name="Howden P.J."/>
            <person name="Huckle E."/>
            <person name="Johnson C."/>
            <person name="Johnson D."/>
            <person name="Joy A.A."/>
            <person name="Kay M."/>
            <person name="Keenan S."/>
            <person name="Kershaw J.K."/>
            <person name="Kimberley A.M."/>
            <person name="King A."/>
            <person name="Knights A."/>
            <person name="Laird G.K."/>
            <person name="Langford C."/>
            <person name="Lawlor S."/>
            <person name="Leongamornlert D.A."/>
            <person name="Leversha M."/>
            <person name="Lloyd C."/>
            <person name="Lloyd D.M."/>
            <person name="Lovell J."/>
            <person name="Martin S."/>
            <person name="Mashreghi-Mohammadi M."/>
            <person name="Matthews L."/>
            <person name="McLaren S."/>
            <person name="McLay K.E."/>
            <person name="McMurray A."/>
            <person name="Milne S."/>
            <person name="Nickerson T."/>
            <person name="Nisbett J."/>
            <person name="Nordsiek G."/>
            <person name="Pearce A.V."/>
            <person name="Peck A.I."/>
            <person name="Porter K.M."/>
            <person name="Pandian R."/>
            <person name="Pelan S."/>
            <person name="Phillimore B."/>
            <person name="Povey S."/>
            <person name="Ramsey Y."/>
            <person name="Rand V."/>
            <person name="Scharfe M."/>
            <person name="Sehra H.K."/>
            <person name="Shownkeen R."/>
            <person name="Sims S.K."/>
            <person name="Skuce C.D."/>
            <person name="Smith M."/>
            <person name="Steward C.A."/>
            <person name="Swarbreck D."/>
            <person name="Sycamore N."/>
            <person name="Tester J."/>
            <person name="Thorpe A."/>
            <person name="Tracey A."/>
            <person name="Tromans A."/>
            <person name="Thomas D.W."/>
            <person name="Wall M."/>
            <person name="Wallis J.M."/>
            <person name="West A.P."/>
            <person name="Whitehead S.L."/>
            <person name="Willey D.L."/>
            <person name="Williams S.A."/>
            <person name="Wilming L."/>
            <person name="Wray P.W."/>
            <person name="Young L."/>
            <person name="Ashurst J.L."/>
            <person name="Coulson A."/>
            <person name="Blocker H."/>
            <person name="Durbin R.M."/>
            <person name="Sulston J.E."/>
            <person name="Hubbard T."/>
            <person name="Jackson M.J."/>
            <person name="Bentley D.R."/>
            <person name="Beck S."/>
            <person name="Rogers J."/>
            <person name="Dunham I."/>
        </authorList>
    </citation>
    <scope>NUCLEOTIDE SEQUENCE [LARGE SCALE GENOMIC DNA]</scope>
</reference>
<reference key="5">
    <citation type="submission" date="2005-07" db="EMBL/GenBank/DDBJ databases">
        <authorList>
            <person name="Mural R.J."/>
            <person name="Istrail S."/>
            <person name="Sutton G.G."/>
            <person name="Florea L."/>
            <person name="Halpern A.L."/>
            <person name="Mobarry C.M."/>
            <person name="Lippert R."/>
            <person name="Walenz B."/>
            <person name="Shatkay H."/>
            <person name="Dew I."/>
            <person name="Miller J.R."/>
            <person name="Flanigan M.J."/>
            <person name="Edwards N.J."/>
            <person name="Bolanos R."/>
            <person name="Fasulo D."/>
            <person name="Halldorsson B.V."/>
            <person name="Hannenhalli S."/>
            <person name="Turner R."/>
            <person name="Yooseph S."/>
            <person name="Lu F."/>
            <person name="Nusskern D.R."/>
            <person name="Shue B.C."/>
            <person name="Zheng X.H."/>
            <person name="Zhong F."/>
            <person name="Delcher A.L."/>
            <person name="Huson D.H."/>
            <person name="Kravitz S.A."/>
            <person name="Mouchard L."/>
            <person name="Reinert K."/>
            <person name="Remington K.A."/>
            <person name="Clark A.G."/>
            <person name="Waterman M.S."/>
            <person name="Eichler E.E."/>
            <person name="Adams M.D."/>
            <person name="Hunkapiller M.W."/>
            <person name="Myers E.W."/>
            <person name="Venter J.C."/>
        </authorList>
    </citation>
    <scope>NUCLEOTIDE SEQUENCE [LARGE SCALE GENOMIC DNA]</scope>
</reference>
<reference key="6">
    <citation type="journal article" date="2004" name="Genome Res.">
        <title>The status, quality, and expansion of the NIH full-length cDNA project: the Mammalian Gene Collection (MGC).</title>
        <authorList>
            <consortium name="The MGC Project Team"/>
        </authorList>
    </citation>
    <scope>NUCLEOTIDE SEQUENCE [LARGE SCALE MRNA]</scope>
    <source>
        <tissue>Brain</tissue>
    </source>
</reference>
<keyword id="KW-0963">Cytoplasm</keyword>
<keyword id="KW-0206">Cytoskeleton</keyword>
<keyword id="KW-0597">Phosphoprotein</keyword>
<keyword id="KW-1267">Proteomics identification</keyword>
<keyword id="KW-1185">Reference proteome</keyword>
<dbReference type="EMBL" id="AF113527">
    <property type="protein sequence ID" value="AAD44110.1"/>
    <property type="molecule type" value="Genomic_DNA"/>
</dbReference>
<dbReference type="EMBL" id="AB284521">
    <property type="protein sequence ID" value="BAF41972.1"/>
    <property type="molecule type" value="Genomic_DNA"/>
</dbReference>
<dbReference type="EMBL" id="AK313871">
    <property type="protein sequence ID" value="BAG36599.1"/>
    <property type="molecule type" value="mRNA"/>
</dbReference>
<dbReference type="EMBL" id="AL359692">
    <property type="status" value="NOT_ANNOTATED_CDS"/>
    <property type="molecule type" value="Genomic_DNA"/>
</dbReference>
<dbReference type="EMBL" id="CH471105">
    <property type="protein sequence ID" value="EAW59025.1"/>
    <property type="molecule type" value="Genomic_DNA"/>
</dbReference>
<dbReference type="EMBL" id="BC033789">
    <property type="protein sequence ID" value="AAH33789.1"/>
    <property type="molecule type" value="mRNA"/>
</dbReference>
<dbReference type="CCDS" id="CCDS6771.1"/>
<dbReference type="RefSeq" id="NP_006677.1">
    <property type="nucleotide sequence ID" value="NM_006686.4"/>
</dbReference>
<dbReference type="SMR" id="Q9Y614"/>
<dbReference type="BioGRID" id="116088">
    <property type="interactions" value="2"/>
</dbReference>
<dbReference type="FunCoup" id="Q9Y614">
    <property type="interactions" value="26"/>
</dbReference>
<dbReference type="IntAct" id="Q9Y614">
    <property type="interactions" value="4"/>
</dbReference>
<dbReference type="STRING" id="9606.ENSP00000363799"/>
<dbReference type="iPTMnet" id="Q9Y614"/>
<dbReference type="PhosphoSitePlus" id="Q9Y614"/>
<dbReference type="BioMuta" id="ACTL7B"/>
<dbReference type="DMDM" id="27923724"/>
<dbReference type="MassIVE" id="Q9Y614"/>
<dbReference type="PaxDb" id="9606-ENSP00000363799"/>
<dbReference type="PeptideAtlas" id="Q9Y614"/>
<dbReference type="ProteomicsDB" id="86576"/>
<dbReference type="Antibodypedia" id="14908">
    <property type="antibodies" value="268 antibodies from 28 providers"/>
</dbReference>
<dbReference type="DNASU" id="10880"/>
<dbReference type="Ensembl" id="ENST00000374667.5">
    <property type="protein sequence ID" value="ENSP00000363799.3"/>
    <property type="gene ID" value="ENSG00000148156.8"/>
</dbReference>
<dbReference type="GeneID" id="10880"/>
<dbReference type="KEGG" id="hsa:10880"/>
<dbReference type="MANE-Select" id="ENST00000374667.5">
    <property type="protein sequence ID" value="ENSP00000363799.3"/>
    <property type="RefSeq nucleotide sequence ID" value="NM_006686.4"/>
    <property type="RefSeq protein sequence ID" value="NP_006677.1"/>
</dbReference>
<dbReference type="UCSC" id="uc004bdi.4">
    <property type="organism name" value="human"/>
</dbReference>
<dbReference type="AGR" id="HGNC:162"/>
<dbReference type="CTD" id="10880"/>
<dbReference type="DisGeNET" id="10880"/>
<dbReference type="GeneCards" id="ACTL7B"/>
<dbReference type="HGNC" id="HGNC:162">
    <property type="gene designation" value="ACTL7B"/>
</dbReference>
<dbReference type="HPA" id="ENSG00000148156">
    <property type="expression patterns" value="Tissue enriched (testis)"/>
</dbReference>
<dbReference type="MIM" id="604304">
    <property type="type" value="gene"/>
</dbReference>
<dbReference type="neXtProt" id="NX_Q9Y614"/>
<dbReference type="OpenTargets" id="ENSG00000148156"/>
<dbReference type="PharmGKB" id="PA24484"/>
<dbReference type="VEuPathDB" id="HostDB:ENSG00000148156"/>
<dbReference type="eggNOG" id="KOG0676">
    <property type="taxonomic scope" value="Eukaryota"/>
</dbReference>
<dbReference type="GeneTree" id="ENSGT00940000162582"/>
<dbReference type="HOGENOM" id="CLU_027965_0_2_1"/>
<dbReference type="InParanoid" id="Q9Y614"/>
<dbReference type="OMA" id="WDCVQNI"/>
<dbReference type="OrthoDB" id="9925380at2759"/>
<dbReference type="PAN-GO" id="Q9Y614">
    <property type="GO annotations" value="3 GO annotations based on evolutionary models"/>
</dbReference>
<dbReference type="PhylomeDB" id="Q9Y614"/>
<dbReference type="TreeFam" id="TF354237"/>
<dbReference type="PathwayCommons" id="Q9Y614"/>
<dbReference type="SignaLink" id="Q9Y614"/>
<dbReference type="BioGRID-ORCS" id="10880">
    <property type="hits" value="16 hits in 1142 CRISPR screens"/>
</dbReference>
<dbReference type="ChiTaRS" id="ACTL7B">
    <property type="organism name" value="human"/>
</dbReference>
<dbReference type="GenomeRNAi" id="10880"/>
<dbReference type="Pharos" id="Q9Y614">
    <property type="development level" value="Tbio"/>
</dbReference>
<dbReference type="PRO" id="PR:Q9Y614"/>
<dbReference type="Proteomes" id="UP000005640">
    <property type="component" value="Chromosome 9"/>
</dbReference>
<dbReference type="RNAct" id="Q9Y614">
    <property type="molecule type" value="protein"/>
</dbReference>
<dbReference type="Bgee" id="ENSG00000148156">
    <property type="expression patterns" value="Expressed in left testis and 50 other cell types or tissues"/>
</dbReference>
<dbReference type="ExpressionAtlas" id="Q9Y614">
    <property type="expression patterns" value="baseline and differential"/>
</dbReference>
<dbReference type="GO" id="GO:0015629">
    <property type="term" value="C:actin cytoskeleton"/>
    <property type="evidence" value="ECO:0000304"/>
    <property type="project" value="ProtInc"/>
</dbReference>
<dbReference type="GO" id="GO:0005737">
    <property type="term" value="C:cytoplasm"/>
    <property type="evidence" value="ECO:0000318"/>
    <property type="project" value="GO_Central"/>
</dbReference>
<dbReference type="GO" id="GO:0005634">
    <property type="term" value="C:nucleus"/>
    <property type="evidence" value="ECO:0000318"/>
    <property type="project" value="GO_Central"/>
</dbReference>
<dbReference type="GO" id="GO:0005200">
    <property type="term" value="F:structural constituent of cytoskeleton"/>
    <property type="evidence" value="ECO:0000304"/>
    <property type="project" value="ProtInc"/>
</dbReference>
<dbReference type="CDD" id="cd10214">
    <property type="entry name" value="ASKHA_NBD_ACTL7"/>
    <property type="match status" value="1"/>
</dbReference>
<dbReference type="FunFam" id="3.90.640.10:FF:000007">
    <property type="entry name" value="Actin like 7B"/>
    <property type="match status" value="1"/>
</dbReference>
<dbReference type="FunFam" id="3.30.420.40:FF:000050">
    <property type="entry name" value="Actin, alpha skeletal muscle"/>
    <property type="match status" value="1"/>
</dbReference>
<dbReference type="Gene3D" id="3.30.420.40">
    <property type="match status" value="2"/>
</dbReference>
<dbReference type="Gene3D" id="3.90.640.10">
    <property type="entry name" value="Actin, Chain A, domain 4"/>
    <property type="match status" value="1"/>
</dbReference>
<dbReference type="InterPro" id="IPR004000">
    <property type="entry name" value="Actin"/>
</dbReference>
<dbReference type="InterPro" id="IPR043129">
    <property type="entry name" value="ATPase_NBD"/>
</dbReference>
<dbReference type="PANTHER" id="PTHR11937">
    <property type="entry name" value="ACTIN"/>
    <property type="match status" value="1"/>
</dbReference>
<dbReference type="Pfam" id="PF00022">
    <property type="entry name" value="Actin"/>
    <property type="match status" value="1"/>
</dbReference>
<dbReference type="PRINTS" id="PR00190">
    <property type="entry name" value="ACTIN"/>
</dbReference>
<dbReference type="SMART" id="SM00268">
    <property type="entry name" value="ACTIN"/>
    <property type="match status" value="1"/>
</dbReference>
<dbReference type="SUPFAM" id="SSF53067">
    <property type="entry name" value="Actin-like ATPase domain"/>
    <property type="match status" value="2"/>
</dbReference>
<gene>
    <name type="primary">ACTL7B</name>
</gene>
<proteinExistence type="evidence at protein level"/>
<name>ACL7B_HUMAN</name>
<accession>Q9Y614</accession>
<accession>B2R9Q2</accession>
<accession>Q5JSV1</accession>
<protein>
    <recommendedName>
        <fullName>Actin-like protein 7B</fullName>
    </recommendedName>
    <alternativeName>
        <fullName>Actin-like-7-beta</fullName>
    </alternativeName>
</protein>
<comment type="interaction">
    <interactant intactId="EBI-25835070">
        <id>Q9Y614</id>
    </interactant>
    <interactant intactId="EBI-718729">
        <id>P55212</id>
        <label>CASP6</label>
    </interactant>
    <organismsDiffer>false</organismsDiffer>
    <experiments>3</experiments>
</comment>
<comment type="interaction">
    <interactant intactId="EBI-25835070">
        <id>Q9Y614</id>
    </interactant>
    <interactant intactId="EBI-473886">
        <id>O00291</id>
        <label>HIP1</label>
    </interactant>
    <organismsDiffer>false</organismsDiffer>
    <experiments>3</experiments>
</comment>
<comment type="interaction">
    <interactant intactId="EBI-25835070">
        <id>Q9Y614</id>
    </interactant>
    <interactant intactId="EBI-21591415">
        <id>P13473-2</id>
        <label>LAMP2</label>
    </interactant>
    <organismsDiffer>false</organismsDiffer>
    <experiments>3</experiments>
</comment>
<comment type="interaction">
    <interactant intactId="EBI-25835070">
        <id>Q9Y614</id>
    </interactant>
    <interactant intactId="EBI-286642">
        <id>P62826</id>
        <label>RAN</label>
    </interactant>
    <organismsDiffer>false</organismsDiffer>
    <experiments>3</experiments>
</comment>
<comment type="subcellular location">
    <subcellularLocation>
        <location evidence="1">Cytoplasm</location>
        <location evidence="1">Cytoskeleton</location>
    </subcellularLocation>
</comment>
<comment type="tissue specificity">
    <text evidence="4">Detected only in the testis and, to a lesser extent, in the prostate.</text>
</comment>
<comment type="similarity">
    <text evidence="5">Belongs to the actin family.</text>
</comment>